<organism>
    <name type="scientific">Salmonella gallinarum (strain 287/91 / NCTC 13346)</name>
    <dbReference type="NCBI Taxonomy" id="550538"/>
    <lineage>
        <taxon>Bacteria</taxon>
        <taxon>Pseudomonadati</taxon>
        <taxon>Pseudomonadota</taxon>
        <taxon>Gammaproteobacteria</taxon>
        <taxon>Enterobacterales</taxon>
        <taxon>Enterobacteriaceae</taxon>
        <taxon>Salmonella</taxon>
    </lineage>
</organism>
<keyword id="KW-0050">Antiport</keyword>
<keyword id="KW-0997">Cell inner membrane</keyword>
<keyword id="KW-1003">Cell membrane</keyword>
<keyword id="KW-0406">Ion transport</keyword>
<keyword id="KW-0472">Membrane</keyword>
<keyword id="KW-0915">Sodium</keyword>
<keyword id="KW-0739">Sodium transport</keyword>
<keyword id="KW-0812">Transmembrane</keyword>
<keyword id="KW-1133">Transmembrane helix</keyword>
<keyword id="KW-0813">Transport</keyword>
<proteinExistence type="inferred from homology"/>
<protein>
    <recommendedName>
        <fullName evidence="1">Na(+)/H(+) antiporter NhaB</fullName>
    </recommendedName>
    <alternativeName>
        <fullName evidence="1">Sodium/proton antiporter NhaB</fullName>
    </alternativeName>
</protein>
<comment type="function">
    <text evidence="1">Na(+)/H(+) antiporter that extrudes sodium in exchange for external protons.</text>
</comment>
<comment type="catalytic activity">
    <reaction evidence="1">
        <text>2 Na(+)(in) + 3 H(+)(out) = 2 Na(+)(out) + 3 H(+)(in)</text>
        <dbReference type="Rhea" id="RHEA:29247"/>
        <dbReference type="ChEBI" id="CHEBI:15378"/>
        <dbReference type="ChEBI" id="CHEBI:29101"/>
    </reaction>
    <physiologicalReaction direction="left-to-right" evidence="1">
        <dbReference type="Rhea" id="RHEA:29248"/>
    </physiologicalReaction>
</comment>
<comment type="subcellular location">
    <subcellularLocation>
        <location evidence="1">Cell inner membrane</location>
        <topology evidence="1">Multi-pass membrane protein</topology>
    </subcellularLocation>
</comment>
<comment type="similarity">
    <text evidence="1">Belongs to the NhaB Na(+)/H(+) (TC 2.A.34) antiporter family.</text>
</comment>
<evidence type="ECO:0000255" key="1">
    <source>
        <dbReference type="HAMAP-Rule" id="MF_01599"/>
    </source>
</evidence>
<dbReference type="EMBL" id="AM933173">
    <property type="protein sequence ID" value="CAR37188.1"/>
    <property type="molecule type" value="Genomic_DNA"/>
</dbReference>
<dbReference type="RefSeq" id="WP_000406440.1">
    <property type="nucleotide sequence ID" value="NC_011274.1"/>
</dbReference>
<dbReference type="SMR" id="B5R8Z5"/>
<dbReference type="KEGG" id="seg:SG1311"/>
<dbReference type="HOGENOM" id="CLU_041110_0_0_6"/>
<dbReference type="Proteomes" id="UP000008321">
    <property type="component" value="Chromosome"/>
</dbReference>
<dbReference type="GO" id="GO:0005886">
    <property type="term" value="C:plasma membrane"/>
    <property type="evidence" value="ECO:0007669"/>
    <property type="project" value="UniProtKB-SubCell"/>
</dbReference>
<dbReference type="GO" id="GO:0015385">
    <property type="term" value="F:sodium:proton antiporter activity"/>
    <property type="evidence" value="ECO:0007669"/>
    <property type="project" value="InterPro"/>
</dbReference>
<dbReference type="HAMAP" id="MF_01599">
    <property type="entry name" value="NhaB"/>
    <property type="match status" value="1"/>
</dbReference>
<dbReference type="InterPro" id="IPR004671">
    <property type="entry name" value="Na+/H+_antiporter_NhaB"/>
</dbReference>
<dbReference type="NCBIfam" id="TIGR00774">
    <property type="entry name" value="NhaB"/>
    <property type="match status" value="1"/>
</dbReference>
<dbReference type="NCBIfam" id="NF007093">
    <property type="entry name" value="PRK09547.1"/>
    <property type="match status" value="1"/>
</dbReference>
<dbReference type="PANTHER" id="PTHR43302:SF1">
    <property type="entry name" value="NA(+)_H(+) ANTIPORTER NHAB"/>
    <property type="match status" value="1"/>
</dbReference>
<dbReference type="PANTHER" id="PTHR43302">
    <property type="entry name" value="TRANSPORTER ARSB-RELATED"/>
    <property type="match status" value="1"/>
</dbReference>
<dbReference type="Pfam" id="PF06450">
    <property type="entry name" value="NhaB"/>
    <property type="match status" value="1"/>
</dbReference>
<reference key="1">
    <citation type="journal article" date="2008" name="Genome Res.">
        <title>Comparative genome analysis of Salmonella enteritidis PT4 and Salmonella gallinarum 287/91 provides insights into evolutionary and host adaptation pathways.</title>
        <authorList>
            <person name="Thomson N.R."/>
            <person name="Clayton D.J."/>
            <person name="Windhorst D."/>
            <person name="Vernikos G."/>
            <person name="Davidson S."/>
            <person name="Churcher C."/>
            <person name="Quail M.A."/>
            <person name="Stevens M."/>
            <person name="Jones M.A."/>
            <person name="Watson M."/>
            <person name="Barron A."/>
            <person name="Layton A."/>
            <person name="Pickard D."/>
            <person name="Kingsley R.A."/>
            <person name="Bignell A."/>
            <person name="Clark L."/>
            <person name="Harris B."/>
            <person name="Ormond D."/>
            <person name="Abdellah Z."/>
            <person name="Brooks K."/>
            <person name="Cherevach I."/>
            <person name="Chillingworth T."/>
            <person name="Woodward J."/>
            <person name="Norberczak H."/>
            <person name="Lord A."/>
            <person name="Arrowsmith C."/>
            <person name="Jagels K."/>
            <person name="Moule S."/>
            <person name="Mungall K."/>
            <person name="Saunders M."/>
            <person name="Whitehead S."/>
            <person name="Chabalgoity J.A."/>
            <person name="Maskell D."/>
            <person name="Humphreys T."/>
            <person name="Roberts M."/>
            <person name="Barrow P.A."/>
            <person name="Dougan G."/>
            <person name="Parkhill J."/>
        </authorList>
    </citation>
    <scope>NUCLEOTIDE SEQUENCE [LARGE SCALE GENOMIC DNA]</scope>
    <source>
        <strain>287/91 / NCTC 13346</strain>
    </source>
</reference>
<name>NHAB_SALG2</name>
<feature type="chain" id="PRO_1000191540" description="Na(+)/H(+) antiporter NhaB">
    <location>
        <begin position="1"/>
        <end position="514"/>
    </location>
</feature>
<feature type="transmembrane region" description="Helical" evidence="1">
    <location>
        <begin position="23"/>
        <end position="43"/>
    </location>
</feature>
<feature type="transmembrane region" description="Helical" evidence="1">
    <location>
        <begin position="63"/>
        <end position="83"/>
    </location>
</feature>
<feature type="transmembrane region" description="Helical" evidence="1">
    <location>
        <begin position="97"/>
        <end position="117"/>
    </location>
</feature>
<feature type="transmembrane region" description="Helical" evidence="1">
    <location>
        <begin position="120"/>
        <end position="140"/>
    </location>
</feature>
<feature type="transmembrane region" description="Helical" evidence="1">
    <location>
        <begin position="144"/>
        <end position="164"/>
    </location>
</feature>
<feature type="transmembrane region" description="Helical" evidence="1">
    <location>
        <begin position="202"/>
        <end position="222"/>
    </location>
</feature>
<feature type="transmembrane region" description="Helical" evidence="1">
    <location>
        <begin position="238"/>
        <end position="258"/>
    </location>
</feature>
<feature type="transmembrane region" description="Helical" evidence="1">
    <location>
        <begin position="303"/>
        <end position="323"/>
    </location>
</feature>
<feature type="transmembrane region" description="Helical" evidence="1">
    <location>
        <begin position="357"/>
        <end position="377"/>
    </location>
</feature>
<feature type="transmembrane region" description="Helical" evidence="1">
    <location>
        <begin position="391"/>
        <end position="411"/>
    </location>
</feature>
<feature type="transmembrane region" description="Helical" evidence="1">
    <location>
        <begin position="447"/>
        <end position="467"/>
    </location>
</feature>
<feature type="transmembrane region" description="Helical" evidence="1">
    <location>
        <begin position="475"/>
        <end position="495"/>
    </location>
</feature>
<sequence>MEISWGRAMWRNFLGQSPDWYKLALLVFLIVNPFIFLANPFIAGWLLVAEFIFTLAMALKCYPLLPGGLLAIEAVIIGMTSAAHVREEVAANLEVLLLLMFMVAGIYFMKQLLLFIFTRLLLSIRSKMVLSLAFCVAAAFLSAFLDALTVVAVVISVAVGFYGIYHRVASSRGEENDMLDDSHIDPHYKTVLEQFRGFLRSLMMHAGVGTALGGVMTMVGEPQNLIIAKAAGWHFGDFFLRMSPVTVPVLVCGLLTCMLVEKMRWFGYGETLPEKVRDVLQQFDDQSRKKRTRQDKIKLIVQAVIGVWLVTALALHLAEVGLIGLSVIILATALTGVTDEHAIGKAFTESLPFTALLTVFFSIVAVIIDQHLFAPIIQFVLQASEHAQLTLFYLFNGLLSSISDNVFVGTIYINEAKAAMENGAISLKQFELLTVAINTGTNLPSVATPNGQAAFLFLLTSALAPLIRLSYGRMVWMALPYTIVLTLIGLLCVEFTLAPATEWMTQAGWLATLS</sequence>
<accession>B5R8Z5</accession>
<gene>
    <name evidence="1" type="primary">nhaB</name>
    <name type="ordered locus">SG1311</name>
</gene>